<comment type="function">
    <text evidence="1">Probably functions as a manganese efflux pump.</text>
</comment>
<comment type="subcellular location">
    <subcellularLocation>
        <location evidence="1">Cell inner membrane</location>
        <topology evidence="1">Multi-pass membrane protein</topology>
    </subcellularLocation>
</comment>
<comment type="similarity">
    <text evidence="1">Belongs to the MntP (TC 9.B.29) family.</text>
</comment>
<gene>
    <name evidence="1" type="primary">mntP</name>
    <name type="ordered locus">Abu_0335</name>
</gene>
<organism>
    <name type="scientific">Aliarcobacter butzleri (strain RM4018)</name>
    <name type="common">Arcobacter butzleri</name>
    <dbReference type="NCBI Taxonomy" id="367737"/>
    <lineage>
        <taxon>Bacteria</taxon>
        <taxon>Pseudomonadati</taxon>
        <taxon>Campylobacterota</taxon>
        <taxon>Epsilonproteobacteria</taxon>
        <taxon>Campylobacterales</taxon>
        <taxon>Arcobacteraceae</taxon>
        <taxon>Aliarcobacter</taxon>
    </lineage>
</organism>
<dbReference type="EMBL" id="CP000361">
    <property type="protein sequence ID" value="ABV66610.1"/>
    <property type="molecule type" value="Genomic_DNA"/>
</dbReference>
<dbReference type="RefSeq" id="WP_012012170.1">
    <property type="nucleotide sequence ID" value="NC_009850.1"/>
</dbReference>
<dbReference type="STRING" id="367737.Abu_0335"/>
<dbReference type="GeneID" id="24304546"/>
<dbReference type="KEGG" id="abu:Abu_0335"/>
<dbReference type="eggNOG" id="COG1971">
    <property type="taxonomic scope" value="Bacteria"/>
</dbReference>
<dbReference type="HOGENOM" id="CLU_096410_3_0_7"/>
<dbReference type="Proteomes" id="UP000001136">
    <property type="component" value="Chromosome"/>
</dbReference>
<dbReference type="GO" id="GO:0005886">
    <property type="term" value="C:plasma membrane"/>
    <property type="evidence" value="ECO:0007669"/>
    <property type="project" value="UniProtKB-SubCell"/>
</dbReference>
<dbReference type="GO" id="GO:0005384">
    <property type="term" value="F:manganese ion transmembrane transporter activity"/>
    <property type="evidence" value="ECO:0007669"/>
    <property type="project" value="UniProtKB-UniRule"/>
</dbReference>
<dbReference type="HAMAP" id="MF_01521">
    <property type="entry name" value="MntP_pump"/>
    <property type="match status" value="1"/>
</dbReference>
<dbReference type="InterPro" id="IPR003810">
    <property type="entry name" value="Mntp/YtaF"/>
</dbReference>
<dbReference type="InterPro" id="IPR022929">
    <property type="entry name" value="Put_MntP"/>
</dbReference>
<dbReference type="PANTHER" id="PTHR35529">
    <property type="entry name" value="MANGANESE EFFLUX PUMP MNTP-RELATED"/>
    <property type="match status" value="1"/>
</dbReference>
<dbReference type="PANTHER" id="PTHR35529:SF1">
    <property type="entry name" value="MANGANESE EFFLUX PUMP MNTP-RELATED"/>
    <property type="match status" value="1"/>
</dbReference>
<dbReference type="Pfam" id="PF02659">
    <property type="entry name" value="Mntp"/>
    <property type="match status" value="1"/>
</dbReference>
<keyword id="KW-0997">Cell inner membrane</keyword>
<keyword id="KW-1003">Cell membrane</keyword>
<keyword id="KW-0406">Ion transport</keyword>
<keyword id="KW-0464">Manganese</keyword>
<keyword id="KW-0472">Membrane</keyword>
<keyword id="KW-1185">Reference proteome</keyword>
<keyword id="KW-0812">Transmembrane</keyword>
<keyword id="KW-1133">Transmembrane helix</keyword>
<keyword id="KW-0813">Transport</keyword>
<reference key="1">
    <citation type="journal article" date="2007" name="PLoS ONE">
        <title>The complete genome sequence and analysis of the Epsilonproteobacterium Arcobacter butzleri.</title>
        <authorList>
            <person name="Miller W.G."/>
            <person name="Parker C.T."/>
            <person name="Rubenfield M."/>
            <person name="Mendz G.L."/>
            <person name="Woesten M.M.S.M."/>
            <person name="Ussery D.W."/>
            <person name="Stolz J.F."/>
            <person name="Binnewies T.T."/>
            <person name="Hallin P.F."/>
            <person name="Wang G."/>
            <person name="Malek J.A."/>
            <person name="Rogosin A."/>
            <person name="Stanker L.H."/>
            <person name="Mandrell R.E."/>
        </authorList>
    </citation>
    <scope>NUCLEOTIDE SEQUENCE [LARGE SCALE GENOMIC DNA]</scope>
    <source>
        <strain>RM4018</strain>
    </source>
</reference>
<protein>
    <recommendedName>
        <fullName evidence="1">Putative manganese efflux pump MntP</fullName>
    </recommendedName>
</protein>
<accession>A8ERN6</accession>
<name>MNTP_ALIB4</name>
<proteinExistence type="inferred from homology"/>
<sequence length="179" mass="19457">MLEVLILAFALSMDAFAVSIGLGIKNKQNLKALALKAGLFFGIFQALMPFLGFLGGIGLREYIQGYDKIVAFILLLAIGGKMIYEAFNENVEEEISQITNKILLTLAIATSLDAMAAGYSLHLFNLNIYLSLFVIGFTTFIISYIGVYVGSRGGEKYESKAEILGGVVLILIGLKILLF</sequence>
<evidence type="ECO:0000255" key="1">
    <source>
        <dbReference type="HAMAP-Rule" id="MF_01521"/>
    </source>
</evidence>
<feature type="chain" id="PRO_0000315557" description="Putative manganese efflux pump MntP">
    <location>
        <begin position="1"/>
        <end position="179"/>
    </location>
</feature>
<feature type="transmembrane region" description="Helical" evidence="1">
    <location>
        <begin position="4"/>
        <end position="24"/>
    </location>
</feature>
<feature type="transmembrane region" description="Helical" evidence="1">
    <location>
        <begin position="39"/>
        <end position="59"/>
    </location>
</feature>
<feature type="transmembrane region" description="Helical" evidence="1">
    <location>
        <begin position="69"/>
        <end position="89"/>
    </location>
</feature>
<feature type="transmembrane region" description="Helical" evidence="1">
    <location>
        <begin position="102"/>
        <end position="122"/>
    </location>
</feature>
<feature type="transmembrane region" description="Helical" evidence="1">
    <location>
        <begin position="128"/>
        <end position="148"/>
    </location>
</feature>
<feature type="transmembrane region" description="Helical" evidence="1">
    <location>
        <begin position="159"/>
        <end position="179"/>
    </location>
</feature>